<accession>Q043R9</accession>
<name>RNH2_LACGA</name>
<comment type="function">
    <text evidence="1">Endonuclease that specifically degrades the RNA of RNA-DNA hybrids.</text>
</comment>
<comment type="catalytic activity">
    <reaction evidence="1">
        <text>Endonucleolytic cleavage to 5'-phosphomonoester.</text>
        <dbReference type="EC" id="3.1.26.4"/>
    </reaction>
</comment>
<comment type="cofactor">
    <cofactor evidence="1">
        <name>Mn(2+)</name>
        <dbReference type="ChEBI" id="CHEBI:29035"/>
    </cofactor>
    <cofactor evidence="1">
        <name>Mg(2+)</name>
        <dbReference type="ChEBI" id="CHEBI:18420"/>
    </cofactor>
    <text evidence="1">Manganese or magnesium. Binds 1 divalent metal ion per monomer in the absence of substrate. May bind a second metal ion after substrate binding.</text>
</comment>
<comment type="subcellular location">
    <subcellularLocation>
        <location evidence="1">Cytoplasm</location>
    </subcellularLocation>
</comment>
<comment type="similarity">
    <text evidence="1">Belongs to the RNase HII family.</text>
</comment>
<gene>
    <name evidence="1" type="primary">rnhB</name>
    <name type="ordered locus">LGAS_0914</name>
</gene>
<reference key="1">
    <citation type="journal article" date="2006" name="Proc. Natl. Acad. Sci. U.S.A.">
        <title>Comparative genomics of the lactic acid bacteria.</title>
        <authorList>
            <person name="Makarova K.S."/>
            <person name="Slesarev A."/>
            <person name="Wolf Y.I."/>
            <person name="Sorokin A."/>
            <person name="Mirkin B."/>
            <person name="Koonin E.V."/>
            <person name="Pavlov A."/>
            <person name="Pavlova N."/>
            <person name="Karamychev V."/>
            <person name="Polouchine N."/>
            <person name="Shakhova V."/>
            <person name="Grigoriev I."/>
            <person name="Lou Y."/>
            <person name="Rohksar D."/>
            <person name="Lucas S."/>
            <person name="Huang K."/>
            <person name="Goodstein D.M."/>
            <person name="Hawkins T."/>
            <person name="Plengvidhya V."/>
            <person name="Welker D."/>
            <person name="Hughes J."/>
            <person name="Goh Y."/>
            <person name="Benson A."/>
            <person name="Baldwin K."/>
            <person name="Lee J.-H."/>
            <person name="Diaz-Muniz I."/>
            <person name="Dosti B."/>
            <person name="Smeianov V."/>
            <person name="Wechter W."/>
            <person name="Barabote R."/>
            <person name="Lorca G."/>
            <person name="Altermann E."/>
            <person name="Barrangou R."/>
            <person name="Ganesan B."/>
            <person name="Xie Y."/>
            <person name="Rawsthorne H."/>
            <person name="Tamir D."/>
            <person name="Parker C."/>
            <person name="Breidt F."/>
            <person name="Broadbent J.R."/>
            <person name="Hutkins R."/>
            <person name="O'Sullivan D."/>
            <person name="Steele J."/>
            <person name="Unlu G."/>
            <person name="Saier M.H. Jr."/>
            <person name="Klaenhammer T."/>
            <person name="Richardson P."/>
            <person name="Kozyavkin S."/>
            <person name="Weimer B.C."/>
            <person name="Mills D.A."/>
        </authorList>
    </citation>
    <scope>NUCLEOTIDE SEQUENCE [LARGE SCALE GENOMIC DNA]</scope>
    <source>
        <strain>ATCC 33323 / DSM 20243 / BCRC 14619 / CIP 102991 / JCM 1131 / KCTC 3163 / NCIMB 11718 / NCTC 13722 / AM63</strain>
    </source>
</reference>
<evidence type="ECO:0000255" key="1">
    <source>
        <dbReference type="HAMAP-Rule" id="MF_00052"/>
    </source>
</evidence>
<evidence type="ECO:0000255" key="2">
    <source>
        <dbReference type="PROSITE-ProRule" id="PRU01319"/>
    </source>
</evidence>
<protein>
    <recommendedName>
        <fullName evidence="1">Ribonuclease HII</fullName>
        <shortName evidence="1">RNase HII</shortName>
        <ecNumber evidence="1">3.1.26.4</ecNumber>
    </recommendedName>
</protein>
<sequence>MTITEIRNLLQGEVSSEQLEELRADERKGVQKLLISYEKRQAKRAQAVAQFQDRFSYEKKFWQKSQLVAGVDEVGRGPLAGPVVTAAVILPHNFDLIDVNDSKKLSPKKRKELFPKILAKAVSVSVGLANNDVIDRINIYEADRLAMAHAVQGLKVKPDALLVDAMNVPLNIPQVKLIHGDAKSNSIAAASIVAKVFRDNLMDAYGEVYPEYDFKHNAGYGTREHMEALKKYGPTPIHRRSFAPVSEYEK</sequence>
<proteinExistence type="inferred from homology"/>
<organism>
    <name type="scientific">Lactobacillus gasseri (strain ATCC 33323 / DSM 20243 / BCRC 14619 / CIP 102991 / JCM 1131 / KCTC 3163 / NCIMB 11718 / NCTC 13722 / AM63)</name>
    <dbReference type="NCBI Taxonomy" id="324831"/>
    <lineage>
        <taxon>Bacteria</taxon>
        <taxon>Bacillati</taxon>
        <taxon>Bacillota</taxon>
        <taxon>Bacilli</taxon>
        <taxon>Lactobacillales</taxon>
        <taxon>Lactobacillaceae</taxon>
        <taxon>Lactobacillus</taxon>
    </lineage>
</organism>
<keyword id="KW-0963">Cytoplasm</keyword>
<keyword id="KW-0255">Endonuclease</keyword>
<keyword id="KW-0378">Hydrolase</keyword>
<keyword id="KW-0464">Manganese</keyword>
<keyword id="KW-0479">Metal-binding</keyword>
<keyword id="KW-0540">Nuclease</keyword>
<dbReference type="EC" id="3.1.26.4" evidence="1"/>
<dbReference type="EMBL" id="CP000413">
    <property type="protein sequence ID" value="ABJ60303.1"/>
    <property type="molecule type" value="Genomic_DNA"/>
</dbReference>
<dbReference type="RefSeq" id="WP_003647376.1">
    <property type="nucleotide sequence ID" value="NZ_WBMG01000014.1"/>
</dbReference>
<dbReference type="SMR" id="Q043R9"/>
<dbReference type="GeneID" id="29639826"/>
<dbReference type="KEGG" id="lga:LGAS_0914"/>
<dbReference type="HOGENOM" id="CLU_036532_2_1_9"/>
<dbReference type="BioCyc" id="LGAS324831:G1G6Y-908-MONOMER"/>
<dbReference type="Proteomes" id="UP000000664">
    <property type="component" value="Chromosome"/>
</dbReference>
<dbReference type="GO" id="GO:0005737">
    <property type="term" value="C:cytoplasm"/>
    <property type="evidence" value="ECO:0007669"/>
    <property type="project" value="UniProtKB-SubCell"/>
</dbReference>
<dbReference type="GO" id="GO:0032299">
    <property type="term" value="C:ribonuclease H2 complex"/>
    <property type="evidence" value="ECO:0007669"/>
    <property type="project" value="TreeGrafter"/>
</dbReference>
<dbReference type="GO" id="GO:0030145">
    <property type="term" value="F:manganese ion binding"/>
    <property type="evidence" value="ECO:0007669"/>
    <property type="project" value="UniProtKB-UniRule"/>
</dbReference>
<dbReference type="GO" id="GO:0003723">
    <property type="term" value="F:RNA binding"/>
    <property type="evidence" value="ECO:0007669"/>
    <property type="project" value="InterPro"/>
</dbReference>
<dbReference type="GO" id="GO:0004523">
    <property type="term" value="F:RNA-DNA hybrid ribonuclease activity"/>
    <property type="evidence" value="ECO:0007669"/>
    <property type="project" value="UniProtKB-UniRule"/>
</dbReference>
<dbReference type="GO" id="GO:0043137">
    <property type="term" value="P:DNA replication, removal of RNA primer"/>
    <property type="evidence" value="ECO:0007669"/>
    <property type="project" value="TreeGrafter"/>
</dbReference>
<dbReference type="GO" id="GO:0006298">
    <property type="term" value="P:mismatch repair"/>
    <property type="evidence" value="ECO:0007669"/>
    <property type="project" value="TreeGrafter"/>
</dbReference>
<dbReference type="CDD" id="cd07182">
    <property type="entry name" value="RNase_HII_bacteria_HII_like"/>
    <property type="match status" value="1"/>
</dbReference>
<dbReference type="FunFam" id="3.30.420.10:FF:000006">
    <property type="entry name" value="Ribonuclease HII"/>
    <property type="match status" value="1"/>
</dbReference>
<dbReference type="Gene3D" id="3.30.420.10">
    <property type="entry name" value="Ribonuclease H-like superfamily/Ribonuclease H"/>
    <property type="match status" value="1"/>
</dbReference>
<dbReference type="HAMAP" id="MF_00052_B">
    <property type="entry name" value="RNase_HII_B"/>
    <property type="match status" value="1"/>
</dbReference>
<dbReference type="InterPro" id="IPR022898">
    <property type="entry name" value="RNase_HII"/>
</dbReference>
<dbReference type="InterPro" id="IPR001352">
    <property type="entry name" value="RNase_HII/HIII"/>
</dbReference>
<dbReference type="InterPro" id="IPR024567">
    <property type="entry name" value="RNase_HII/HIII_dom"/>
</dbReference>
<dbReference type="InterPro" id="IPR012337">
    <property type="entry name" value="RNaseH-like_sf"/>
</dbReference>
<dbReference type="InterPro" id="IPR036397">
    <property type="entry name" value="RNaseH_sf"/>
</dbReference>
<dbReference type="NCBIfam" id="NF000594">
    <property type="entry name" value="PRK00015.1-1"/>
    <property type="match status" value="1"/>
</dbReference>
<dbReference type="NCBIfam" id="NF000595">
    <property type="entry name" value="PRK00015.1-3"/>
    <property type="match status" value="1"/>
</dbReference>
<dbReference type="PANTHER" id="PTHR10954">
    <property type="entry name" value="RIBONUCLEASE H2 SUBUNIT A"/>
    <property type="match status" value="1"/>
</dbReference>
<dbReference type="PANTHER" id="PTHR10954:SF18">
    <property type="entry name" value="RIBONUCLEASE HII"/>
    <property type="match status" value="1"/>
</dbReference>
<dbReference type="Pfam" id="PF01351">
    <property type="entry name" value="RNase_HII"/>
    <property type="match status" value="1"/>
</dbReference>
<dbReference type="SUPFAM" id="SSF53098">
    <property type="entry name" value="Ribonuclease H-like"/>
    <property type="match status" value="1"/>
</dbReference>
<dbReference type="PROSITE" id="PS51975">
    <property type="entry name" value="RNASE_H_2"/>
    <property type="match status" value="1"/>
</dbReference>
<feature type="chain" id="PRO_1000031156" description="Ribonuclease HII">
    <location>
        <begin position="1"/>
        <end position="250"/>
    </location>
</feature>
<feature type="domain" description="RNase H type-2" evidence="2">
    <location>
        <begin position="66"/>
        <end position="250"/>
    </location>
</feature>
<feature type="binding site" evidence="1">
    <location>
        <position position="72"/>
    </location>
    <ligand>
        <name>a divalent metal cation</name>
        <dbReference type="ChEBI" id="CHEBI:60240"/>
    </ligand>
</feature>
<feature type="binding site" evidence="1">
    <location>
        <position position="73"/>
    </location>
    <ligand>
        <name>a divalent metal cation</name>
        <dbReference type="ChEBI" id="CHEBI:60240"/>
    </ligand>
</feature>
<feature type="binding site" evidence="1">
    <location>
        <position position="164"/>
    </location>
    <ligand>
        <name>a divalent metal cation</name>
        <dbReference type="ChEBI" id="CHEBI:60240"/>
    </ligand>
</feature>